<organismHost>
    <name type="scientific">Chrysanthemum morifolium</name>
    <name type="common">Florist's daisy</name>
    <name type="synonym">Dendranthema grandiflorum</name>
    <dbReference type="NCBI Taxonomy" id="41568"/>
</organismHost>
<organismHost>
    <name type="scientific">Gynura</name>
    <dbReference type="NCBI Taxonomy" id="109564"/>
</organismHost>
<keyword id="KW-1038">Host endoplasmic reticulum</keyword>
<keyword id="KW-1043">Host membrane</keyword>
<keyword id="KW-0472">Membrane</keyword>
<keyword id="KW-0812">Transmembrane</keyword>
<keyword id="KW-1133">Transmembrane helix</keyword>
<keyword id="KW-0813">Transport</keyword>
<keyword id="KW-0916">Viral movement protein</keyword>
<feature type="chain" id="PRO_0000222596" description="Movement protein TGB2">
    <location>
        <begin position="1"/>
        <end position="106"/>
    </location>
</feature>
<feature type="topological domain" description="Cytoplasmic" evidence="1">
    <location>
        <begin position="1"/>
        <end position="9"/>
    </location>
</feature>
<feature type="transmembrane region" description="Helical" evidence="2">
    <location>
        <begin position="10"/>
        <end position="30"/>
    </location>
</feature>
<feature type="topological domain" description="Lumenal" evidence="1">
    <location>
        <begin position="31"/>
        <end position="71"/>
    </location>
</feature>
<feature type="transmembrane region" description="Helical" evidence="2">
    <location>
        <begin position="72"/>
        <end position="92"/>
    </location>
</feature>
<feature type="topological domain" description="Cytoplasmic" evidence="1">
    <location>
        <begin position="93"/>
        <end position="106"/>
    </location>
</feature>
<dbReference type="EMBL" id="S60150">
    <property type="protein sequence ID" value="AAB20078.2"/>
    <property type="molecule type" value="Genomic_RNA"/>
</dbReference>
<dbReference type="PIR" id="JQ1248">
    <property type="entry name" value="JQ1248"/>
</dbReference>
<dbReference type="GO" id="GO:0044167">
    <property type="term" value="C:host cell endoplasmic reticulum membrane"/>
    <property type="evidence" value="ECO:0007669"/>
    <property type="project" value="UniProtKB-SubCell"/>
</dbReference>
<dbReference type="GO" id="GO:0016020">
    <property type="term" value="C:membrane"/>
    <property type="evidence" value="ECO:0007669"/>
    <property type="project" value="UniProtKB-KW"/>
</dbReference>
<dbReference type="GO" id="GO:0046740">
    <property type="term" value="P:transport of virus in host, cell to cell"/>
    <property type="evidence" value="ECO:0007669"/>
    <property type="project" value="UniProtKB-KW"/>
</dbReference>
<dbReference type="InterPro" id="IPR001896">
    <property type="entry name" value="Plant_vir_prot"/>
</dbReference>
<dbReference type="Pfam" id="PF01307">
    <property type="entry name" value="Plant_vir_prot"/>
    <property type="match status" value="1"/>
</dbReference>
<name>TGB2_CVB</name>
<organism>
    <name type="scientific">Chrysanthemum virus B</name>
    <name type="common">CVB</name>
    <dbReference type="NCBI Taxonomy" id="12165"/>
    <lineage>
        <taxon>Viruses</taxon>
        <taxon>Riboviria</taxon>
        <taxon>Orthornavirae</taxon>
        <taxon>Kitrinoviricota</taxon>
        <taxon>Alsuviricetes</taxon>
        <taxon>Tymovirales</taxon>
        <taxon>Betaflexiviridae</taxon>
        <taxon>Quinvirinae</taxon>
        <taxon>Carlavirus</taxon>
    </lineage>
</organism>
<proteinExistence type="inferred from homology"/>
<evidence type="ECO:0000250" key="1"/>
<evidence type="ECO:0000255" key="2"/>
<evidence type="ECO:0000305" key="3"/>
<reference key="1">
    <citation type="journal article" date="1991" name="J. Gen. Virol.">
        <title>Nucleotide sequence and gene organization of the 3'-terminal region of chrysanthemum virus B genomic RNA.</title>
        <authorList>
            <person name="Levay K."/>
            <person name="Zavriev S."/>
        </authorList>
    </citation>
    <scope>NUCLEOTIDE SEQUENCE [GENOMIC RNA]</scope>
</reference>
<gene>
    <name type="ORF">ORF3</name>
</gene>
<comment type="function">
    <text evidence="1">Plays a role in viral cell-to-cell propagation, by facilitating genome transport to neighboring plant cells through plasmosdesmata,.</text>
</comment>
<comment type="subcellular location">
    <subcellularLocation>
        <location evidence="1">Host endoplasmic reticulum membrane</location>
    </subcellularLocation>
</comment>
<comment type="miscellaneous">
    <text>TGBp1, TGBp2 and TGBp3 seem to act together for cell-to-cell propagation. TGBp1 is the main movement protein that physically cross the plasmodesma with the viral genome. TGBp2 and TGBp3 would facilitate TGBp1 function.</text>
</comment>
<comment type="similarity">
    <text evidence="3">Belongs to the Tymovirales TGBp2 protein family.</text>
</comment>
<accession>P37989</accession>
<sequence>MPLTPPPDHTKVLLVAAIGLSIVASILTYSRNTLPQVGDHSHLLPHGGVYKDGTKTIVYGGPRKLNSLEGGFNLPVQPWFLVILLSAAIFLLSCRSGHRRVCGQCH</sequence>
<protein>
    <recommendedName>
        <fullName>Movement protein TGB2</fullName>
    </recommendedName>
    <alternativeName>
        <fullName>12 kDa protein</fullName>
    </alternativeName>
    <alternativeName>
        <fullName>Triple gene block 2 protein</fullName>
        <shortName>TGBp2</shortName>
    </alternativeName>
</protein>